<protein>
    <recommendedName>
        <fullName>Major fimbrium subunit FimA type-3</fullName>
    </recommendedName>
    <alternativeName>
        <fullName>Fimbrillin</fullName>
        <shortName>Fimbrilin</shortName>
    </alternativeName>
    <alternativeName>
        <fullName>Major fimbrial subunit protein type III</fullName>
    </alternativeName>
</protein>
<name>FIMA3_PORGN</name>
<keyword id="KW-0130">Cell adhesion</keyword>
<keyword id="KW-0998">Cell outer membrane</keyword>
<keyword id="KW-0281">Fimbrium</keyword>
<keyword id="KW-0449">Lipoprotein</keyword>
<keyword id="KW-0472">Membrane</keyword>
<keyword id="KW-0564">Palmitate</keyword>
<keyword id="KW-0732">Signal</keyword>
<keyword id="KW-0843">Virulence</keyword>
<feature type="signal peptide" evidence="3">
    <location>
        <begin position="1"/>
        <end position="18"/>
    </location>
</feature>
<feature type="propeptide" id="PRO_0000009164" evidence="1">
    <location>
        <begin position="19"/>
        <end position="46"/>
    </location>
</feature>
<feature type="chain" id="PRO_0000009165" description="Major fimbrium subunit FimA type-3">
    <location>
        <begin position="47"/>
        <end position="389"/>
    </location>
</feature>
<feature type="region of interest" description="Important for oligomerization and fimbrium assembly" evidence="2">
    <location>
        <begin position="380"/>
        <end position="389"/>
    </location>
</feature>
<feature type="site" description="Cleavage; by gingipain" evidence="1">
    <location>
        <begin position="46"/>
        <end position="47"/>
    </location>
</feature>
<feature type="lipid moiety-binding region" description="N-palmitoyl cysteine" evidence="3">
    <location>
        <position position="19"/>
    </location>
</feature>
<feature type="lipid moiety-binding region" description="S-diacylglycerol cysteine" evidence="3">
    <location>
        <position position="19"/>
    </location>
</feature>
<sequence>MKKTKFFLLGLAALAMTACNKDNEAEPVTESNATISVVLKTSNPNRAFGNAGDEAKVAKLTVMVYKGEQQEAIKSVENAIKVENIKCGAGQRTLVVMANTGGMELAGKTLAEVKALTTELTEGNQEAAGLIMTAEPVEVTLVAGNNYYGYDGSQGGNQISQGTPLEIKRVHARIAFTKIEVTMSQSYANKYNFAPENIYALVAKKKSNLFGASLANSDDAYLTGSLTTFNGAYSPANYTHVDWLGRDYTEIGAATVNTPKGFYVLESTYAQNAGLRPTILCVKGKLTKHDGTALSSEEMTAAFNAGWIVANNDPTTYYPVLVNFESNNYTYTGEAVEKGKIVRNHKFDINLTITGPGTNNPENPITESANLNVNCVVAAWKGVVQNVIW</sequence>
<accession>Q51826</accession>
<comment type="function">
    <text evidence="4 5">Structural subunit of the major fimbriae (Probable). These long, filamentous pili are attached to the cell surface; they mediate biofilm formation, adhesion onto host cells and onto other bacteria that are part of the oral microbiome. They play an important role in the invasion of periodontal tissues. Fimbriae and their constituents are major virulence factors. FimA proteins from different strains have highly divergent sequences, and this has been used for classification. The sequence-based classification correlates with pathogenicity.</text>
</comment>
<comment type="subunit">
    <text evidence="1 2">Fimbriae are composed of a major, structural subunit (FimA) and the minor components FimC, FimD and FimE (By similarity). Head-to-tail oligomerization of FimA molecules mediates assembly of the fimbrium stalk, while the minor components probably form the fimbrium tip. Linear, head-to-tail oligomerization of FimA is mediated by a conformation change, facilitating the insertion of a C-terminal beta-strand into a groove in the N-terminal domain of the following subunit (By similarity).</text>
</comment>
<comment type="subcellular location">
    <subcellularLocation>
        <location evidence="1">Fimbrium</location>
    </subcellularLocation>
    <subcellularLocation>
        <location evidence="1">Cell outer membrane</location>
    </subcellularLocation>
    <text evidence="1">Synthesized as palmitoylated precursor. The lipidated propeptide is removed during processing to the mature protein.</text>
</comment>
<comment type="PTM">
    <text evidence="1">Synthesized as palmitoylated lipoprotein precursor. Efficient export to the outer membrane and integration into fimbriae requires lipidation and subsequent proteolytic removal of the lipidated propeptide.</text>
</comment>
<comment type="miscellaneous">
    <text evidence="5">The name (major fimbrium subunit) does not indicate the abundance of the protein, but is derived from the greater length of the major fimbriae. In strain ATCC 33277 and strain 381, major fimbriae are 300 - 1600 nM in length and about 5 nm in diameter. In contrast, minor fimbriae are only about 80 - 120 nm long. This length difference is observed only in a small number of strains, including strain ATCC 33277 and strain 381, and is due to a loss of function mutation in FimB, a protein that restricts fimbrial length in other strains.</text>
</comment>
<comment type="similarity">
    <text evidence="5">Belongs to the bacteroidetes fimbrillin superfamily. FimA/Mfa1 family.</text>
</comment>
<comment type="sequence caution" evidence="5">
    <conflict type="erroneous initiation">
        <sequence resource="EMBL-CDS" id="BAA04627"/>
    </conflict>
    <text>Truncated N-terminus.</text>
</comment>
<gene>
    <name type="primary">fimA</name>
</gene>
<reference key="1">
    <citation type="journal article" date="1993" name="Biochem. Biophys. Res. Commun.">
        <title>Molecular cloning and sequencing of the fimbrilin gene of Porphyromonas gingivalis strains and characterization of recombinant proteins.</title>
        <authorList>
            <person name="Fujiwara T."/>
            <person name="Morishima S."/>
            <person name="Takahashi I."/>
            <person name="Hamada S."/>
        </authorList>
    </citation>
    <scope>NUCLEOTIDE SEQUENCE [GENOMIC DNA]</scope>
    <source>
        <strain>6/26</strain>
    </source>
</reference>
<reference key="2">
    <citation type="journal article" date="2002" name="Infect. Immun.">
        <title>Functional differences among FimA variants of Porphyromonas gingivalis and their effects on adhesion to and invasion of human epithelial cells.</title>
        <authorList>
            <person name="Nakagawa I."/>
            <person name="Amano A."/>
            <person name="Kuboniwa M."/>
            <person name="Nakamura T."/>
            <person name="Kawabata S."/>
            <person name="Hamada S."/>
        </authorList>
    </citation>
    <scope>FUNCTION</scope>
    <scope>CLASSIFICATION INTO TYPES</scope>
</reference>
<organism>
    <name type="scientific">Porphyromonas gingivalis</name>
    <name type="common">Bacteroides gingivalis</name>
    <dbReference type="NCBI Taxonomy" id="837"/>
    <lineage>
        <taxon>Bacteria</taxon>
        <taxon>Pseudomonadati</taxon>
        <taxon>Bacteroidota</taxon>
        <taxon>Bacteroidia</taxon>
        <taxon>Bacteroidales</taxon>
        <taxon>Porphyromonadaceae</taxon>
        <taxon>Porphyromonas</taxon>
    </lineage>
</organism>
<evidence type="ECO:0000250" key="1">
    <source>
        <dbReference type="UniProtKB" id="B2RH54"/>
    </source>
</evidence>
<evidence type="ECO:0000250" key="2">
    <source>
        <dbReference type="UniProtKB" id="P59914"/>
    </source>
</evidence>
<evidence type="ECO:0000255" key="3">
    <source>
        <dbReference type="PROSITE-ProRule" id="PRU00303"/>
    </source>
</evidence>
<evidence type="ECO:0000269" key="4">
    <source>
    </source>
</evidence>
<evidence type="ECO:0000305" key="5"/>
<dbReference type="EMBL" id="D17801">
    <property type="protein sequence ID" value="BAA04627.1"/>
    <property type="status" value="ALT_INIT"/>
    <property type="molecule type" value="Genomic_DNA"/>
</dbReference>
<dbReference type="PIR" id="D60275">
    <property type="entry name" value="D60275"/>
</dbReference>
<dbReference type="PIR" id="JN0920">
    <property type="entry name" value="JN0920"/>
</dbReference>
<dbReference type="SMR" id="Q51826"/>
<dbReference type="GO" id="GO:0009279">
    <property type="term" value="C:cell outer membrane"/>
    <property type="evidence" value="ECO:0007669"/>
    <property type="project" value="UniProtKB-SubCell"/>
</dbReference>
<dbReference type="GO" id="GO:0009289">
    <property type="term" value="C:pilus"/>
    <property type="evidence" value="ECO:0000250"/>
    <property type="project" value="UniProtKB"/>
</dbReference>
<dbReference type="GO" id="GO:0005198">
    <property type="term" value="F:structural molecule activity"/>
    <property type="evidence" value="ECO:0007669"/>
    <property type="project" value="InterPro"/>
</dbReference>
<dbReference type="GO" id="GO:0007155">
    <property type="term" value="P:cell adhesion"/>
    <property type="evidence" value="ECO:0007669"/>
    <property type="project" value="UniProtKB-KW"/>
</dbReference>
<dbReference type="FunFam" id="2.60.40.3690:FF:000001">
    <property type="entry name" value="Major fimbrium subunit FimA type-4"/>
    <property type="match status" value="1"/>
</dbReference>
<dbReference type="Gene3D" id="2.60.40.2580">
    <property type="match status" value="1"/>
</dbReference>
<dbReference type="Gene3D" id="2.60.40.3690">
    <property type="match status" value="1"/>
</dbReference>
<dbReference type="InterPro" id="IPR053878">
    <property type="entry name" value="FimA_C"/>
</dbReference>
<dbReference type="InterPro" id="IPR029141">
    <property type="entry name" value="FimA_N"/>
</dbReference>
<dbReference type="InterPro" id="IPR008110">
    <property type="entry name" value="Fimbrillin"/>
</dbReference>
<dbReference type="Pfam" id="PF22492">
    <property type="entry name" value="FimA4_C"/>
    <property type="match status" value="1"/>
</dbReference>
<dbReference type="Pfam" id="PF06321">
    <property type="entry name" value="P_gingi_FimA"/>
    <property type="match status" value="1"/>
</dbReference>
<dbReference type="PRINTS" id="PR01737">
    <property type="entry name" value="FIMBRILLIN"/>
</dbReference>
<dbReference type="PROSITE" id="PS51257">
    <property type="entry name" value="PROKAR_LIPOPROTEIN"/>
    <property type="match status" value="1"/>
</dbReference>
<proteinExistence type="inferred from homology"/>